<protein>
    <recommendedName>
        <fullName evidence="2">Large ribosomal subunit protein bL27</fullName>
    </recommendedName>
    <alternativeName>
        <fullName evidence="4">50S ribosomal protein L27</fullName>
    </alternativeName>
</protein>
<evidence type="ECO:0000250" key="1">
    <source>
        <dbReference type="UniProtKB" id="Q2FXT0"/>
    </source>
</evidence>
<evidence type="ECO:0000255" key="2">
    <source>
        <dbReference type="HAMAP-Rule" id="MF_00539"/>
    </source>
</evidence>
<evidence type="ECO:0000256" key="3">
    <source>
        <dbReference type="SAM" id="MobiDB-lite"/>
    </source>
</evidence>
<evidence type="ECO:0000305" key="4"/>
<dbReference type="EMBL" id="CP001615">
    <property type="protein sequence ID" value="ACQ71596.1"/>
    <property type="molecule type" value="Genomic_DNA"/>
</dbReference>
<dbReference type="RefSeq" id="WP_015881155.1">
    <property type="nucleotide sequence ID" value="NZ_MOEL01000013.1"/>
</dbReference>
<dbReference type="SMR" id="C4L4N3"/>
<dbReference type="STRING" id="360911.EAT1b_2680"/>
<dbReference type="GeneID" id="94372658"/>
<dbReference type="KEGG" id="eat:EAT1b_2680"/>
<dbReference type="eggNOG" id="COG0211">
    <property type="taxonomic scope" value="Bacteria"/>
</dbReference>
<dbReference type="HOGENOM" id="CLU_095424_4_0_9"/>
<dbReference type="OrthoDB" id="9803474at2"/>
<dbReference type="Proteomes" id="UP000000716">
    <property type="component" value="Chromosome"/>
</dbReference>
<dbReference type="GO" id="GO:0022625">
    <property type="term" value="C:cytosolic large ribosomal subunit"/>
    <property type="evidence" value="ECO:0007669"/>
    <property type="project" value="TreeGrafter"/>
</dbReference>
<dbReference type="GO" id="GO:0003735">
    <property type="term" value="F:structural constituent of ribosome"/>
    <property type="evidence" value="ECO:0007669"/>
    <property type="project" value="InterPro"/>
</dbReference>
<dbReference type="GO" id="GO:0006412">
    <property type="term" value="P:translation"/>
    <property type="evidence" value="ECO:0007669"/>
    <property type="project" value="UniProtKB-UniRule"/>
</dbReference>
<dbReference type="FunFam" id="2.40.50.100:FF:000004">
    <property type="entry name" value="50S ribosomal protein L27"/>
    <property type="match status" value="1"/>
</dbReference>
<dbReference type="Gene3D" id="2.40.50.100">
    <property type="match status" value="1"/>
</dbReference>
<dbReference type="HAMAP" id="MF_00539">
    <property type="entry name" value="Ribosomal_bL27"/>
    <property type="match status" value="1"/>
</dbReference>
<dbReference type="InterPro" id="IPR001684">
    <property type="entry name" value="Ribosomal_bL27"/>
</dbReference>
<dbReference type="InterPro" id="IPR018261">
    <property type="entry name" value="Ribosomal_bL27_CS"/>
</dbReference>
<dbReference type="NCBIfam" id="TIGR00062">
    <property type="entry name" value="L27"/>
    <property type="match status" value="1"/>
</dbReference>
<dbReference type="PANTHER" id="PTHR15893:SF0">
    <property type="entry name" value="LARGE RIBOSOMAL SUBUNIT PROTEIN BL27M"/>
    <property type="match status" value="1"/>
</dbReference>
<dbReference type="PANTHER" id="PTHR15893">
    <property type="entry name" value="RIBOSOMAL PROTEIN L27"/>
    <property type="match status" value="1"/>
</dbReference>
<dbReference type="Pfam" id="PF01016">
    <property type="entry name" value="Ribosomal_L27"/>
    <property type="match status" value="1"/>
</dbReference>
<dbReference type="PRINTS" id="PR00063">
    <property type="entry name" value="RIBOSOMALL27"/>
</dbReference>
<dbReference type="SUPFAM" id="SSF110324">
    <property type="entry name" value="Ribosomal L27 protein-like"/>
    <property type="match status" value="1"/>
</dbReference>
<dbReference type="PROSITE" id="PS00831">
    <property type="entry name" value="RIBOSOMAL_L27"/>
    <property type="match status" value="1"/>
</dbReference>
<gene>
    <name evidence="2" type="primary">rpmA</name>
    <name type="ordered locus">EAT1b_2680</name>
</gene>
<proteinExistence type="inferred from homology"/>
<accession>C4L4N3</accession>
<name>RL27_EXISA</name>
<reference key="1">
    <citation type="journal article" date="2011" name="J. Bacteriol.">
        <title>Complete genome sequence of the Thermophilic Bacterium Exiguobacterium sp. AT1b.</title>
        <authorList>
            <person name="Vishnivetskaya T.A."/>
            <person name="Lucas S."/>
            <person name="Copeland A."/>
            <person name="Lapidus A."/>
            <person name="Glavina del Rio T."/>
            <person name="Dalin E."/>
            <person name="Tice H."/>
            <person name="Bruce D.C."/>
            <person name="Goodwin L.A."/>
            <person name="Pitluck S."/>
            <person name="Saunders E."/>
            <person name="Brettin T."/>
            <person name="Detter C."/>
            <person name="Han C."/>
            <person name="Larimer F."/>
            <person name="Land M.L."/>
            <person name="Hauser L.J."/>
            <person name="Kyrpides N.C."/>
            <person name="Ovchinnikova G."/>
            <person name="Kathariou S."/>
            <person name="Ramaley R.F."/>
            <person name="Rodrigues D.F."/>
            <person name="Hendrix C."/>
            <person name="Richardson P."/>
            <person name="Tiedje J.M."/>
        </authorList>
    </citation>
    <scope>NUCLEOTIDE SEQUENCE [LARGE SCALE GENOMIC DNA]</scope>
    <source>
        <strain>ATCC BAA-1283 / AT1b</strain>
    </source>
</reference>
<comment type="PTM">
    <text evidence="1">The N-terminus is cleaved by ribosomal processing cysteine protease Prp.</text>
</comment>
<comment type="similarity">
    <text evidence="2">Belongs to the bacterial ribosomal protein bL27 family.</text>
</comment>
<keyword id="KW-0687">Ribonucleoprotein</keyword>
<keyword id="KW-0689">Ribosomal protein</keyword>
<feature type="propeptide" id="PRO_0000459895" evidence="1">
    <location>
        <begin position="1"/>
        <end position="9"/>
    </location>
</feature>
<feature type="chain" id="PRO_1000211928" description="Large ribosomal subunit protein bL27">
    <location>
        <begin position="10"/>
        <end position="93"/>
    </location>
</feature>
<feature type="region of interest" description="Disordered" evidence="3">
    <location>
        <begin position="14"/>
        <end position="33"/>
    </location>
</feature>
<organism>
    <name type="scientific">Exiguobacterium sp. (strain ATCC BAA-1283 / AT1b)</name>
    <dbReference type="NCBI Taxonomy" id="360911"/>
    <lineage>
        <taxon>Bacteria</taxon>
        <taxon>Bacillati</taxon>
        <taxon>Bacillota</taxon>
        <taxon>Bacilli</taxon>
        <taxon>Bacillales</taxon>
        <taxon>Bacillales Family XII. Incertae Sedis</taxon>
        <taxon>Exiguobacterium</taxon>
    </lineage>
</organism>
<sequence>MLQLNLQFFASKKGVGSTKNGRDSISKRLGAKRADGQTVSAGSILYRQRGTKIHPGENVGRGGDDTLFAKVDGVVRYERLGRDKKQVSVYPVA</sequence>